<reference key="1">
    <citation type="journal article" date="2007" name="Proc. Natl. Acad. Sci. U.S.A.">
        <title>Genome plasticity of BCG and impact on vaccine efficacy.</title>
        <authorList>
            <person name="Brosch R."/>
            <person name="Gordon S.V."/>
            <person name="Garnier T."/>
            <person name="Eiglmeier K."/>
            <person name="Frigui W."/>
            <person name="Valenti P."/>
            <person name="Dos Santos S."/>
            <person name="Duthoy S."/>
            <person name="Lacroix C."/>
            <person name="Garcia-Pelayo C."/>
            <person name="Inwald J.K."/>
            <person name="Golby P."/>
            <person name="Garcia J.N."/>
            <person name="Hewinson R.G."/>
            <person name="Behr M.A."/>
            <person name="Quail M.A."/>
            <person name="Churcher C."/>
            <person name="Barrell B.G."/>
            <person name="Parkhill J."/>
            <person name="Cole S.T."/>
        </authorList>
    </citation>
    <scope>NUCLEOTIDE SEQUENCE [LARGE SCALE GENOMIC DNA]</scope>
    <source>
        <strain>BCG / Pasteur 1173P2</strain>
    </source>
</reference>
<evidence type="ECO:0000255" key="1">
    <source>
        <dbReference type="HAMAP-Rule" id="MF_00532"/>
    </source>
</evidence>
<evidence type="ECO:0000256" key="2">
    <source>
        <dbReference type="SAM" id="MobiDB-lite"/>
    </source>
</evidence>
<evidence type="ECO:0000305" key="3"/>
<accession>A1KPC9</accession>
<dbReference type="EMBL" id="AM408590">
    <property type="protein sequence ID" value="CAL73497.1"/>
    <property type="molecule type" value="Genomic_DNA"/>
</dbReference>
<dbReference type="RefSeq" id="WP_003418308.1">
    <property type="nucleotide sequence ID" value="NC_008769.1"/>
</dbReference>
<dbReference type="SMR" id="A1KPC9"/>
<dbReference type="GeneID" id="45427432"/>
<dbReference type="KEGG" id="mbb:BCG_3508c"/>
<dbReference type="HOGENOM" id="CLU_046483_2_0_11"/>
<dbReference type="Proteomes" id="UP000001472">
    <property type="component" value="Chromosome"/>
</dbReference>
<dbReference type="GO" id="GO:0005737">
    <property type="term" value="C:cytoplasm"/>
    <property type="evidence" value="ECO:0007669"/>
    <property type="project" value="UniProtKB-ARBA"/>
</dbReference>
<dbReference type="GO" id="GO:0015935">
    <property type="term" value="C:small ribosomal subunit"/>
    <property type="evidence" value="ECO:0007669"/>
    <property type="project" value="TreeGrafter"/>
</dbReference>
<dbReference type="GO" id="GO:0003723">
    <property type="term" value="F:RNA binding"/>
    <property type="evidence" value="ECO:0007669"/>
    <property type="project" value="TreeGrafter"/>
</dbReference>
<dbReference type="GO" id="GO:0003735">
    <property type="term" value="F:structural constituent of ribosome"/>
    <property type="evidence" value="ECO:0007669"/>
    <property type="project" value="InterPro"/>
</dbReference>
<dbReference type="GO" id="GO:0006412">
    <property type="term" value="P:translation"/>
    <property type="evidence" value="ECO:0007669"/>
    <property type="project" value="UniProtKB-UniRule"/>
</dbReference>
<dbReference type="FunFam" id="3.30.230.10:FF:000001">
    <property type="entry name" value="30S ribosomal protein S9"/>
    <property type="match status" value="1"/>
</dbReference>
<dbReference type="Gene3D" id="3.30.230.10">
    <property type="match status" value="1"/>
</dbReference>
<dbReference type="HAMAP" id="MF_00532_B">
    <property type="entry name" value="Ribosomal_uS9_B"/>
    <property type="match status" value="1"/>
</dbReference>
<dbReference type="InterPro" id="IPR020568">
    <property type="entry name" value="Ribosomal_Su5_D2-typ_SF"/>
</dbReference>
<dbReference type="InterPro" id="IPR000754">
    <property type="entry name" value="Ribosomal_uS9"/>
</dbReference>
<dbReference type="InterPro" id="IPR023035">
    <property type="entry name" value="Ribosomal_uS9_bac/plastid"/>
</dbReference>
<dbReference type="InterPro" id="IPR020574">
    <property type="entry name" value="Ribosomal_uS9_CS"/>
</dbReference>
<dbReference type="InterPro" id="IPR014721">
    <property type="entry name" value="Ribsml_uS5_D2-typ_fold_subgr"/>
</dbReference>
<dbReference type="NCBIfam" id="NF001099">
    <property type="entry name" value="PRK00132.1"/>
    <property type="match status" value="1"/>
</dbReference>
<dbReference type="PANTHER" id="PTHR21569">
    <property type="entry name" value="RIBOSOMAL PROTEIN S9"/>
    <property type="match status" value="1"/>
</dbReference>
<dbReference type="PANTHER" id="PTHR21569:SF1">
    <property type="entry name" value="SMALL RIBOSOMAL SUBUNIT PROTEIN US9M"/>
    <property type="match status" value="1"/>
</dbReference>
<dbReference type="Pfam" id="PF00380">
    <property type="entry name" value="Ribosomal_S9"/>
    <property type="match status" value="1"/>
</dbReference>
<dbReference type="SUPFAM" id="SSF54211">
    <property type="entry name" value="Ribosomal protein S5 domain 2-like"/>
    <property type="match status" value="1"/>
</dbReference>
<dbReference type="PROSITE" id="PS00360">
    <property type="entry name" value="RIBOSOMAL_S9"/>
    <property type="match status" value="1"/>
</dbReference>
<feature type="chain" id="PRO_1000051256" description="Small ribosomal subunit protein uS9">
    <location>
        <begin position="1"/>
        <end position="151"/>
    </location>
</feature>
<feature type="region of interest" description="Disordered" evidence="2">
    <location>
        <begin position="1"/>
        <end position="20"/>
    </location>
</feature>
<feature type="region of interest" description="Disordered" evidence="2">
    <location>
        <begin position="121"/>
        <end position="151"/>
    </location>
</feature>
<feature type="compositionally biased region" description="Low complexity" evidence="2">
    <location>
        <begin position="1"/>
        <end position="19"/>
    </location>
</feature>
<feature type="compositionally biased region" description="Basic and acidic residues" evidence="2">
    <location>
        <begin position="127"/>
        <end position="136"/>
    </location>
</feature>
<feature type="compositionally biased region" description="Basic residues" evidence="2">
    <location>
        <begin position="137"/>
        <end position="151"/>
    </location>
</feature>
<name>RS9_MYCBP</name>
<gene>
    <name evidence="1" type="primary">rpsI</name>
    <name type="ordered locus">BCG_3508c</name>
</gene>
<protein>
    <recommendedName>
        <fullName evidence="1">Small ribosomal subunit protein uS9</fullName>
    </recommendedName>
    <alternativeName>
        <fullName evidence="3">30S ribosomal protein S9</fullName>
    </alternativeName>
</protein>
<sequence>MTETTPAPQTPAAPAGPAQSFVLERPIQTVGRRKEAVVRVRLVPGTGKFDLNGRSLEDYFPNKVHQQLIKAPLVTVDRVESFDIFAHLGGGGPSGQAGALRLGIARALILVSPEDRPALKKAGFLTRDPRATERKKYGLKKARKAPQYSKR</sequence>
<organism>
    <name type="scientific">Mycobacterium bovis (strain BCG / Pasteur 1173P2)</name>
    <dbReference type="NCBI Taxonomy" id="410289"/>
    <lineage>
        <taxon>Bacteria</taxon>
        <taxon>Bacillati</taxon>
        <taxon>Actinomycetota</taxon>
        <taxon>Actinomycetes</taxon>
        <taxon>Mycobacteriales</taxon>
        <taxon>Mycobacteriaceae</taxon>
        <taxon>Mycobacterium</taxon>
        <taxon>Mycobacterium tuberculosis complex</taxon>
    </lineage>
</organism>
<proteinExistence type="inferred from homology"/>
<keyword id="KW-0687">Ribonucleoprotein</keyword>
<keyword id="KW-0689">Ribosomal protein</keyword>
<comment type="similarity">
    <text evidence="1">Belongs to the universal ribosomal protein uS9 family.</text>
</comment>